<name>YL300_MIMIV</name>
<dbReference type="EMBL" id="AY653733">
    <property type="protein sequence ID" value="AAV50572.1"/>
    <property type="molecule type" value="Genomic_DNA"/>
</dbReference>
<dbReference type="SMR" id="Q5UPY6"/>
<dbReference type="KEGG" id="vg:9924915"/>
<dbReference type="OrthoDB" id="17753at10239"/>
<dbReference type="Proteomes" id="UP000001134">
    <property type="component" value="Genome"/>
</dbReference>
<dbReference type="Gene3D" id="3.40.1440.10">
    <property type="entry name" value="GIY-YIG endonuclease"/>
    <property type="match status" value="1"/>
</dbReference>
<dbReference type="InterPro" id="IPR000305">
    <property type="entry name" value="GIY-YIG_endonuc"/>
</dbReference>
<dbReference type="InterPro" id="IPR035901">
    <property type="entry name" value="GIY-YIG_endonuc_sf"/>
</dbReference>
<dbReference type="InterPro" id="IPR050381">
    <property type="entry name" value="SLX1_endonuclease"/>
</dbReference>
<dbReference type="PANTHER" id="PTHR20208">
    <property type="entry name" value="STRUCTURE-SPECIFIC ENDONUCLEASE SUBUNIT SLX1"/>
    <property type="match status" value="1"/>
</dbReference>
<dbReference type="PANTHER" id="PTHR20208:SF13">
    <property type="entry name" value="STRUCTURE-SPECIFIC ENDONUCLEASE SUBUNIT SLX1"/>
    <property type="match status" value="1"/>
</dbReference>
<dbReference type="Pfam" id="PF01541">
    <property type="entry name" value="GIY-YIG"/>
    <property type="match status" value="1"/>
</dbReference>
<dbReference type="SUPFAM" id="SSF82771">
    <property type="entry name" value="GIY-YIG endonuclease"/>
    <property type="match status" value="1"/>
</dbReference>
<dbReference type="PROSITE" id="PS50164">
    <property type="entry name" value="GIY_YIG"/>
    <property type="match status" value="1"/>
</dbReference>
<reference key="1">
    <citation type="journal article" date="2004" name="Science">
        <title>The 1.2-megabase genome sequence of Mimivirus.</title>
        <authorList>
            <person name="Raoult D."/>
            <person name="Audic S."/>
            <person name="Robert C."/>
            <person name="Abergel C."/>
            <person name="Renesto P."/>
            <person name="Ogata H."/>
            <person name="La Scola B."/>
            <person name="Susan M."/>
            <person name="Claverie J.-M."/>
        </authorList>
    </citation>
    <scope>NUCLEOTIDE SEQUENCE [LARGE SCALE GENOMIC DNA]</scope>
    <source>
        <strain>Rowbotham-Bradford</strain>
    </source>
</reference>
<keyword id="KW-1185">Reference proteome</keyword>
<feature type="chain" id="PRO_0000244036" description="Uncharacterized protein L300">
    <location>
        <begin position="1"/>
        <end position="166"/>
    </location>
</feature>
<feature type="domain" description="GIY-YIG" evidence="1">
    <location>
        <begin position="2"/>
        <end position="82"/>
    </location>
</feature>
<feature type="region of interest" description="Disordered" evidence="2">
    <location>
        <begin position="23"/>
        <end position="43"/>
    </location>
</feature>
<proteinExistence type="predicted"/>
<protein>
    <recommendedName>
        <fullName>Uncharacterized protein L300</fullName>
    </recommendedName>
</protein>
<accession>Q5UPY6</accession>
<gene>
    <name type="ordered locus">MIMI_L300</name>
</gene>
<sequence>MDNWVCYLIMSLDSKETYIGSTNNRQRRLNDHNNLNPSRKGAKRTRGRTWIPILYISGFENKNACLSFESGWKRLSKKRNIQRLLLINEISNIKLNYNNDPKWNRIMDLLYFVHNITFIGTKFKLNSDVKHPVILPENLFIEIMNEDWITELSWPYFINTYMISFD</sequence>
<evidence type="ECO:0000255" key="1">
    <source>
        <dbReference type="PROSITE-ProRule" id="PRU00977"/>
    </source>
</evidence>
<evidence type="ECO:0000256" key="2">
    <source>
        <dbReference type="SAM" id="MobiDB-lite"/>
    </source>
</evidence>
<organism>
    <name type="scientific">Acanthamoeba polyphaga mimivirus</name>
    <name type="common">APMV</name>
    <dbReference type="NCBI Taxonomy" id="212035"/>
    <lineage>
        <taxon>Viruses</taxon>
        <taxon>Varidnaviria</taxon>
        <taxon>Bamfordvirae</taxon>
        <taxon>Nucleocytoviricota</taxon>
        <taxon>Megaviricetes</taxon>
        <taxon>Imitervirales</taxon>
        <taxon>Mimiviridae</taxon>
        <taxon>Megamimivirinae</taxon>
        <taxon>Mimivirus</taxon>
        <taxon>Mimivirus bradfordmassiliense</taxon>
    </lineage>
</organism>
<organismHost>
    <name type="scientific">Acanthamoeba polyphaga</name>
    <name type="common">Amoeba</name>
    <dbReference type="NCBI Taxonomy" id="5757"/>
</organismHost>